<accession>Q4FNE2</accession>
<proteinExistence type="inferred from homology"/>
<gene>
    <name evidence="1" type="primary">hisD</name>
    <name type="ordered locus">SAR11_0475</name>
</gene>
<keyword id="KW-0028">Amino-acid biosynthesis</keyword>
<keyword id="KW-0368">Histidine biosynthesis</keyword>
<keyword id="KW-0479">Metal-binding</keyword>
<keyword id="KW-0520">NAD</keyword>
<keyword id="KW-0560">Oxidoreductase</keyword>
<keyword id="KW-1185">Reference proteome</keyword>
<keyword id="KW-0862">Zinc</keyword>
<reference key="1">
    <citation type="journal article" date="2005" name="Science">
        <title>Genome streamlining in a cosmopolitan oceanic bacterium.</title>
        <authorList>
            <person name="Giovannoni S.J."/>
            <person name="Tripp H.J."/>
            <person name="Givan S."/>
            <person name="Podar M."/>
            <person name="Vergin K.L."/>
            <person name="Baptista D."/>
            <person name="Bibbs L."/>
            <person name="Eads J."/>
            <person name="Richardson T.H."/>
            <person name="Noordewier M."/>
            <person name="Rappe M.S."/>
            <person name="Short J.M."/>
            <person name="Carrington J.C."/>
            <person name="Mathur E.J."/>
        </authorList>
    </citation>
    <scope>NUCLEOTIDE SEQUENCE [LARGE SCALE GENOMIC DNA]</scope>
    <source>
        <strain>HTCC1062</strain>
    </source>
</reference>
<organism>
    <name type="scientific">Pelagibacter ubique (strain HTCC1062)</name>
    <dbReference type="NCBI Taxonomy" id="335992"/>
    <lineage>
        <taxon>Bacteria</taxon>
        <taxon>Pseudomonadati</taxon>
        <taxon>Pseudomonadota</taxon>
        <taxon>Alphaproteobacteria</taxon>
        <taxon>Candidatus Pelagibacterales</taxon>
        <taxon>Candidatus Pelagibacteraceae</taxon>
        <taxon>Candidatus Pelagibacter</taxon>
    </lineage>
</organism>
<feature type="chain" id="PRO_0000135809" description="Histidinol dehydrogenase">
    <location>
        <begin position="1"/>
        <end position="428"/>
    </location>
</feature>
<feature type="active site" description="Proton acceptor" evidence="1">
    <location>
        <position position="324"/>
    </location>
</feature>
<feature type="active site" description="Proton acceptor" evidence="1">
    <location>
        <position position="325"/>
    </location>
</feature>
<feature type="binding site" evidence="1">
    <location>
        <position position="234"/>
    </location>
    <ligand>
        <name>substrate</name>
    </ligand>
</feature>
<feature type="binding site" evidence="1">
    <location>
        <position position="256"/>
    </location>
    <ligand>
        <name>substrate</name>
    </ligand>
</feature>
<feature type="binding site" evidence="1">
    <location>
        <position position="256"/>
    </location>
    <ligand>
        <name>Zn(2+)</name>
        <dbReference type="ChEBI" id="CHEBI:29105"/>
    </ligand>
</feature>
<feature type="binding site" evidence="1">
    <location>
        <position position="259"/>
    </location>
    <ligand>
        <name>substrate</name>
    </ligand>
</feature>
<feature type="binding site" evidence="1">
    <location>
        <position position="259"/>
    </location>
    <ligand>
        <name>Zn(2+)</name>
        <dbReference type="ChEBI" id="CHEBI:29105"/>
    </ligand>
</feature>
<feature type="binding site" evidence="1">
    <location>
        <position position="325"/>
    </location>
    <ligand>
        <name>substrate</name>
    </ligand>
</feature>
<feature type="binding site" evidence="1">
    <location>
        <position position="358"/>
    </location>
    <ligand>
        <name>substrate</name>
    </ligand>
</feature>
<feature type="binding site" evidence="1">
    <location>
        <position position="358"/>
    </location>
    <ligand>
        <name>Zn(2+)</name>
        <dbReference type="ChEBI" id="CHEBI:29105"/>
    </ligand>
</feature>
<feature type="binding site" evidence="1">
    <location>
        <position position="412"/>
    </location>
    <ligand>
        <name>substrate</name>
    </ligand>
</feature>
<feature type="binding site" evidence="1">
    <location>
        <position position="417"/>
    </location>
    <ligand>
        <name>substrate</name>
    </ligand>
</feature>
<feature type="binding site" evidence="1">
    <location>
        <position position="417"/>
    </location>
    <ligand>
        <name>Zn(2+)</name>
        <dbReference type="ChEBI" id="CHEBI:29105"/>
    </ligand>
</feature>
<comment type="function">
    <text evidence="1">Catalyzes the sequential NAD-dependent oxidations of L-histidinol to L-histidinaldehyde and then to L-histidine.</text>
</comment>
<comment type="catalytic activity">
    <reaction evidence="1">
        <text>L-histidinol + 2 NAD(+) + H2O = L-histidine + 2 NADH + 3 H(+)</text>
        <dbReference type="Rhea" id="RHEA:20641"/>
        <dbReference type="ChEBI" id="CHEBI:15377"/>
        <dbReference type="ChEBI" id="CHEBI:15378"/>
        <dbReference type="ChEBI" id="CHEBI:57540"/>
        <dbReference type="ChEBI" id="CHEBI:57595"/>
        <dbReference type="ChEBI" id="CHEBI:57699"/>
        <dbReference type="ChEBI" id="CHEBI:57945"/>
        <dbReference type="EC" id="1.1.1.23"/>
    </reaction>
</comment>
<comment type="cofactor">
    <cofactor evidence="1">
        <name>Zn(2+)</name>
        <dbReference type="ChEBI" id="CHEBI:29105"/>
    </cofactor>
    <text evidence="1">Binds 1 zinc ion per subunit.</text>
</comment>
<comment type="pathway">
    <text evidence="1">Amino-acid biosynthesis; L-histidine biosynthesis; L-histidine from 5-phospho-alpha-D-ribose 1-diphosphate: step 9/9.</text>
</comment>
<comment type="similarity">
    <text evidence="1">Belongs to the histidinol dehydrogenase family.</text>
</comment>
<protein>
    <recommendedName>
        <fullName evidence="1">Histidinol dehydrogenase</fullName>
        <shortName evidence="1">HDH</shortName>
        <ecNumber evidence="1">1.1.1.23</ecNumber>
    </recommendedName>
</protein>
<sequence length="428" mass="47310">MIKILDSKNKNFDKTLDALLSKRKNKVQLNSVSVIKIIKDVKKNGDKAILKYEKRFNKNSIIAPSIKQINRAIQSLDQKVKKAIDLAYDRIYKFHSLQKFKNISYTDKLKNKLEYKYVPIESVAIYVPGSTASYPSSVLMNAVPAIVAGVKRLVMVNPGQKGKQNPAVLYAAKKCKIKEIYSIGGPSAIAAVAYGTKKIKKVDKIIGPGNSYVAAAKKEVFGDVGIEGMIAGPSEVTIVCDKFSNPEWIASDLIGQAEHDNLAQCILISKDKSIIKKVNYEIINQLKELPRAVIAKNSLLNNGILIYMPSDQKIINTVNKIAPEHLELNTKNYKKVVSKIKNAGSICLGKYAVMAMTDYNVGSNHVLPTNSSARYSSGVSVNEFYKRISYINLSKKGIETLGPSVITLANYEGLVGHAKSVEKRIRRK</sequence>
<dbReference type="EC" id="1.1.1.23" evidence="1"/>
<dbReference type="EMBL" id="CP000084">
    <property type="protein sequence ID" value="AAZ21297.1"/>
    <property type="molecule type" value="Genomic_DNA"/>
</dbReference>
<dbReference type="RefSeq" id="WP_011281737.1">
    <property type="nucleotide sequence ID" value="NC_007205.1"/>
</dbReference>
<dbReference type="SMR" id="Q4FNE2"/>
<dbReference type="STRING" id="335992.SAR11_0475"/>
<dbReference type="GeneID" id="66294975"/>
<dbReference type="KEGG" id="pub:SAR11_0475"/>
<dbReference type="eggNOG" id="COG0141">
    <property type="taxonomic scope" value="Bacteria"/>
</dbReference>
<dbReference type="HOGENOM" id="CLU_006732_3_3_5"/>
<dbReference type="OrthoDB" id="9805269at2"/>
<dbReference type="UniPathway" id="UPA00031">
    <property type="reaction ID" value="UER00014"/>
</dbReference>
<dbReference type="Proteomes" id="UP000002528">
    <property type="component" value="Chromosome"/>
</dbReference>
<dbReference type="GO" id="GO:0005829">
    <property type="term" value="C:cytosol"/>
    <property type="evidence" value="ECO:0007669"/>
    <property type="project" value="TreeGrafter"/>
</dbReference>
<dbReference type="GO" id="GO:0004399">
    <property type="term" value="F:histidinol dehydrogenase activity"/>
    <property type="evidence" value="ECO:0007669"/>
    <property type="project" value="UniProtKB-UniRule"/>
</dbReference>
<dbReference type="GO" id="GO:0051287">
    <property type="term" value="F:NAD binding"/>
    <property type="evidence" value="ECO:0007669"/>
    <property type="project" value="InterPro"/>
</dbReference>
<dbReference type="GO" id="GO:0008270">
    <property type="term" value="F:zinc ion binding"/>
    <property type="evidence" value="ECO:0007669"/>
    <property type="project" value="UniProtKB-UniRule"/>
</dbReference>
<dbReference type="GO" id="GO:0000105">
    <property type="term" value="P:L-histidine biosynthetic process"/>
    <property type="evidence" value="ECO:0007669"/>
    <property type="project" value="UniProtKB-UniRule"/>
</dbReference>
<dbReference type="CDD" id="cd06572">
    <property type="entry name" value="Histidinol_dh"/>
    <property type="match status" value="1"/>
</dbReference>
<dbReference type="FunFam" id="3.40.50.1980:FF:000001">
    <property type="entry name" value="Histidinol dehydrogenase"/>
    <property type="match status" value="1"/>
</dbReference>
<dbReference type="Gene3D" id="1.20.5.1300">
    <property type="match status" value="1"/>
</dbReference>
<dbReference type="Gene3D" id="3.40.50.1980">
    <property type="entry name" value="Nitrogenase molybdenum iron protein domain"/>
    <property type="match status" value="2"/>
</dbReference>
<dbReference type="HAMAP" id="MF_01024">
    <property type="entry name" value="HisD"/>
    <property type="match status" value="1"/>
</dbReference>
<dbReference type="InterPro" id="IPR016161">
    <property type="entry name" value="Ald_DH/histidinol_DH"/>
</dbReference>
<dbReference type="InterPro" id="IPR001692">
    <property type="entry name" value="Histidinol_DH_CS"/>
</dbReference>
<dbReference type="InterPro" id="IPR022695">
    <property type="entry name" value="Histidinol_DH_monofunct"/>
</dbReference>
<dbReference type="InterPro" id="IPR012131">
    <property type="entry name" value="Hstdl_DH"/>
</dbReference>
<dbReference type="NCBIfam" id="TIGR00069">
    <property type="entry name" value="hisD"/>
    <property type="match status" value="1"/>
</dbReference>
<dbReference type="PANTHER" id="PTHR21256:SF2">
    <property type="entry name" value="HISTIDINE BIOSYNTHESIS TRIFUNCTIONAL PROTEIN"/>
    <property type="match status" value="1"/>
</dbReference>
<dbReference type="PANTHER" id="PTHR21256">
    <property type="entry name" value="HISTIDINOL DEHYDROGENASE HDH"/>
    <property type="match status" value="1"/>
</dbReference>
<dbReference type="Pfam" id="PF00815">
    <property type="entry name" value="Histidinol_dh"/>
    <property type="match status" value="1"/>
</dbReference>
<dbReference type="PIRSF" id="PIRSF000099">
    <property type="entry name" value="Histidinol_dh"/>
    <property type="match status" value="1"/>
</dbReference>
<dbReference type="PRINTS" id="PR00083">
    <property type="entry name" value="HOLDHDRGNASE"/>
</dbReference>
<dbReference type="SUPFAM" id="SSF53720">
    <property type="entry name" value="ALDH-like"/>
    <property type="match status" value="1"/>
</dbReference>
<dbReference type="PROSITE" id="PS00611">
    <property type="entry name" value="HISOL_DEHYDROGENASE"/>
    <property type="match status" value="1"/>
</dbReference>
<name>HISX_PELUB</name>
<evidence type="ECO:0000255" key="1">
    <source>
        <dbReference type="HAMAP-Rule" id="MF_01024"/>
    </source>
</evidence>